<sequence>MKNVIRTPETHPLTWRLRDDKQPVWLDEYRSKNGYEGARKALTGLSPDEIVSQVKDAGLKGRGGAGFSTGLKWSLMPKDESMNIRYLLCNADEMEPGTYKDRLLMEQLPHLLVEGMLISAFALKAYRGYIFLRGEYIEAAVHLRRAIAEATEAGLLGKNIMGTGFDFELFVHTGAGRYICGEETALINSLEGRRANPRSKPPFPATSGVWGKPTCVNNVETLCNVPAILANGVEWYQNISKSKDAGTKLMGFSGRVKNPGLWELPFGTTAREILEDYAGGMRDGLKFKAWQPGGAGTDFLTEAHLDLPMEFESIGKAGSRLGTALAMAVDHEIGMVSLVRNLEEFFARESCGWCTPCRDGLPWSVKILRALERGEGQPGDIETLEQLCRFLGPGKTFCAHAPGAVEPLQSAIKYFREEFEAGIKQPFSNTHLINGIQPNLLKERW</sequence>
<gene>
    <name type="primary">nuoF</name>
    <name type="ordered locus">STM2324</name>
</gene>
<evidence type="ECO:0000250" key="1"/>
<evidence type="ECO:0000255" key="2"/>
<evidence type="ECO:0000305" key="3"/>
<comment type="function">
    <text evidence="1">NDH-1 shuttles electrons from NADH, via FMN and iron-sulfur (Fe-S) centers, to quinones in the respiratory chain. The immediate electron acceptor for the enzyme in this species is believed to be ubiquinone. Couples the redox reaction to proton translocation (for every two electrons transferred, four hydrogen ions are translocated across the cytoplasmic membrane), and thus conserves the redox energy in a proton gradient (By similarity).</text>
</comment>
<comment type="catalytic activity">
    <reaction>
        <text>a quinone + NADH + 5 H(+)(in) = a quinol + NAD(+) + 4 H(+)(out)</text>
        <dbReference type="Rhea" id="RHEA:57888"/>
        <dbReference type="ChEBI" id="CHEBI:15378"/>
        <dbReference type="ChEBI" id="CHEBI:24646"/>
        <dbReference type="ChEBI" id="CHEBI:57540"/>
        <dbReference type="ChEBI" id="CHEBI:57945"/>
        <dbReference type="ChEBI" id="CHEBI:132124"/>
    </reaction>
</comment>
<comment type="cofactor">
    <cofactor evidence="3">
        <name>FMN</name>
        <dbReference type="ChEBI" id="CHEBI:58210"/>
    </cofactor>
    <text evidence="3">Binds 1 FMN.</text>
</comment>
<comment type="cofactor">
    <cofactor evidence="3">
        <name>[4Fe-4S] cluster</name>
        <dbReference type="ChEBI" id="CHEBI:49883"/>
    </cofactor>
    <text evidence="3">Binds 1 [4Fe-4S] cluster.</text>
</comment>
<comment type="subunit">
    <text>Composed of 13 different subunits. Subunits NuoCD, E, F, and G constitute the peripheral sector of the complex.</text>
</comment>
<comment type="similarity">
    <text evidence="3">Belongs to the complex I 51 kDa subunit family.</text>
</comment>
<comment type="sequence caution" evidence="3">
    <conflict type="frameshift">
        <sequence resource="EMBL-CDS" id="AAA16062"/>
    </conflict>
</comment>
<reference key="1">
    <citation type="journal article" date="1993" name="Proc. Natl. Acad. Sci. U.S.A.">
        <title>Mutants defective in the energy-conserving NADH dehydrogenase of Salmonella typhimurium identified by a decrease in energy-dependent proteolysis after carbon starvation.</title>
        <authorList>
            <person name="Archer C.D."/>
            <person name="Wang X."/>
            <person name="Elliott T."/>
        </authorList>
    </citation>
    <scope>NUCLEOTIDE SEQUENCE [GENOMIC DNA]</scope>
</reference>
<reference key="2">
    <citation type="journal article" date="2001" name="Nature">
        <title>Complete genome sequence of Salmonella enterica serovar Typhimurium LT2.</title>
        <authorList>
            <person name="McClelland M."/>
            <person name="Sanderson K.E."/>
            <person name="Spieth J."/>
            <person name="Clifton S.W."/>
            <person name="Latreille P."/>
            <person name="Courtney L."/>
            <person name="Porwollik S."/>
            <person name="Ali J."/>
            <person name="Dante M."/>
            <person name="Du F."/>
            <person name="Hou S."/>
            <person name="Layman D."/>
            <person name="Leonard S."/>
            <person name="Nguyen C."/>
            <person name="Scott K."/>
            <person name="Holmes A."/>
            <person name="Grewal N."/>
            <person name="Mulvaney E."/>
            <person name="Ryan E."/>
            <person name="Sun H."/>
            <person name="Florea L."/>
            <person name="Miller W."/>
            <person name="Stoneking T."/>
            <person name="Nhan M."/>
            <person name="Waterston R."/>
            <person name="Wilson R.K."/>
        </authorList>
    </citation>
    <scope>NUCLEOTIDE SEQUENCE [LARGE SCALE GENOMIC DNA]</scope>
    <source>
        <strain>LT2 / SGSC1412 / ATCC 700720</strain>
    </source>
</reference>
<organism>
    <name type="scientific">Salmonella typhimurium (strain LT2 / SGSC1412 / ATCC 700720)</name>
    <dbReference type="NCBI Taxonomy" id="99287"/>
    <lineage>
        <taxon>Bacteria</taxon>
        <taxon>Pseudomonadati</taxon>
        <taxon>Pseudomonadota</taxon>
        <taxon>Gammaproteobacteria</taxon>
        <taxon>Enterobacterales</taxon>
        <taxon>Enterobacteriaceae</taxon>
        <taxon>Salmonella</taxon>
    </lineage>
</organism>
<protein>
    <recommendedName>
        <fullName>NADH-quinone oxidoreductase subunit F</fullName>
        <ecNumber>7.1.1.-</ecNumber>
    </recommendedName>
    <alternativeName>
        <fullName>NADH dehydrogenase I subunit F</fullName>
    </alternativeName>
    <alternativeName>
        <fullName>NDH-1 subunit F</fullName>
    </alternativeName>
</protein>
<accession>P33901</accession>
<feature type="chain" id="PRO_0000118569" description="NADH-quinone oxidoreductase subunit F">
    <location>
        <begin position="1"/>
        <end position="445"/>
    </location>
</feature>
<feature type="binding site" evidence="1">
    <location>
        <begin position="61"/>
        <end position="70"/>
    </location>
    <ligand>
        <name>NAD(+)</name>
        <dbReference type="ChEBI" id="CHEBI:57540"/>
    </ligand>
</feature>
<feature type="binding site" evidence="1">
    <location>
        <begin position="174"/>
        <end position="221"/>
    </location>
    <ligand>
        <name>FMN</name>
        <dbReference type="ChEBI" id="CHEBI:58210"/>
    </ligand>
</feature>
<feature type="binding site" evidence="2">
    <location>
        <position position="351"/>
    </location>
    <ligand>
        <name>[4Fe-4S] cluster</name>
        <dbReference type="ChEBI" id="CHEBI:49883"/>
    </ligand>
</feature>
<feature type="binding site" evidence="2">
    <location>
        <position position="354"/>
    </location>
    <ligand>
        <name>[4Fe-4S] cluster</name>
        <dbReference type="ChEBI" id="CHEBI:49883"/>
    </ligand>
</feature>
<feature type="binding site" evidence="2">
    <location>
        <position position="357"/>
    </location>
    <ligand>
        <name>[4Fe-4S] cluster</name>
        <dbReference type="ChEBI" id="CHEBI:49883"/>
    </ligand>
</feature>
<feature type="binding site" evidence="2">
    <location>
        <position position="398"/>
    </location>
    <ligand>
        <name>[4Fe-4S] cluster</name>
        <dbReference type="ChEBI" id="CHEBI:49883"/>
    </ligand>
</feature>
<name>NUOF_SALTY</name>
<dbReference type="EC" id="7.1.1.-"/>
<dbReference type="EMBL" id="L22504">
    <property type="protein sequence ID" value="AAA16062.1"/>
    <property type="status" value="ALT_FRAME"/>
    <property type="molecule type" value="Unassigned_DNA"/>
</dbReference>
<dbReference type="EMBL" id="AE006468">
    <property type="protein sequence ID" value="AAL21225.1"/>
    <property type="molecule type" value="Genomic_DNA"/>
</dbReference>
<dbReference type="RefSeq" id="NP_461266.1">
    <property type="nucleotide sequence ID" value="NC_003197.2"/>
</dbReference>
<dbReference type="RefSeq" id="WP_000800048.1">
    <property type="nucleotide sequence ID" value="NC_003197.2"/>
</dbReference>
<dbReference type="SMR" id="P33901"/>
<dbReference type="STRING" id="99287.STM2324"/>
<dbReference type="PaxDb" id="99287-STM2324"/>
<dbReference type="GeneID" id="1253846"/>
<dbReference type="KEGG" id="stm:STM2324"/>
<dbReference type="PATRIC" id="fig|99287.12.peg.2461"/>
<dbReference type="HOGENOM" id="CLU_014881_0_1_6"/>
<dbReference type="OMA" id="QGDGKPH"/>
<dbReference type="PhylomeDB" id="P33901"/>
<dbReference type="BioCyc" id="SENT99287:STM2324-MONOMER"/>
<dbReference type="Proteomes" id="UP000001014">
    <property type="component" value="Chromosome"/>
</dbReference>
<dbReference type="GO" id="GO:0045271">
    <property type="term" value="C:respiratory chain complex I"/>
    <property type="evidence" value="ECO:0000318"/>
    <property type="project" value="GO_Central"/>
</dbReference>
<dbReference type="GO" id="GO:0051539">
    <property type="term" value="F:4 iron, 4 sulfur cluster binding"/>
    <property type="evidence" value="ECO:0007669"/>
    <property type="project" value="UniProtKB-KW"/>
</dbReference>
<dbReference type="GO" id="GO:0010181">
    <property type="term" value="F:FMN binding"/>
    <property type="evidence" value="ECO:0007669"/>
    <property type="project" value="InterPro"/>
</dbReference>
<dbReference type="GO" id="GO:0046872">
    <property type="term" value="F:metal ion binding"/>
    <property type="evidence" value="ECO:0007669"/>
    <property type="project" value="UniProtKB-KW"/>
</dbReference>
<dbReference type="GO" id="GO:0051287">
    <property type="term" value="F:NAD binding"/>
    <property type="evidence" value="ECO:0007669"/>
    <property type="project" value="InterPro"/>
</dbReference>
<dbReference type="GO" id="GO:0008137">
    <property type="term" value="F:NADH dehydrogenase (ubiquinone) activity"/>
    <property type="evidence" value="ECO:0007669"/>
    <property type="project" value="InterPro"/>
</dbReference>
<dbReference type="GO" id="GO:0048038">
    <property type="term" value="F:quinone binding"/>
    <property type="evidence" value="ECO:0007669"/>
    <property type="project" value="UniProtKB-KW"/>
</dbReference>
<dbReference type="GO" id="GO:0045333">
    <property type="term" value="P:cellular respiration"/>
    <property type="evidence" value="ECO:0000318"/>
    <property type="project" value="GO_Central"/>
</dbReference>
<dbReference type="FunFam" id="3.40.50.11540:FF:000001">
    <property type="entry name" value="NADH dehydrogenase [ubiquinone] flavoprotein 1, mitochondrial"/>
    <property type="match status" value="1"/>
</dbReference>
<dbReference type="FunFam" id="1.20.1440.230:FF:000002">
    <property type="entry name" value="NADH-quinone oxidoreductase subunit F"/>
    <property type="match status" value="1"/>
</dbReference>
<dbReference type="FunFam" id="3.10.20.600:FF:000002">
    <property type="entry name" value="NADH-quinone oxidoreductase subunit F"/>
    <property type="match status" value="1"/>
</dbReference>
<dbReference type="Gene3D" id="3.10.20.600">
    <property type="match status" value="1"/>
</dbReference>
<dbReference type="Gene3D" id="6.10.250.1450">
    <property type="match status" value="1"/>
</dbReference>
<dbReference type="Gene3D" id="3.40.50.11540">
    <property type="entry name" value="NADH-ubiquinone oxidoreductase 51kDa subunit"/>
    <property type="match status" value="1"/>
</dbReference>
<dbReference type="Gene3D" id="1.20.1440.230">
    <property type="entry name" value="NADH-ubiquinone oxidoreductase 51kDa subunit, iron-sulphur binding domain"/>
    <property type="match status" value="1"/>
</dbReference>
<dbReference type="InterPro" id="IPR001949">
    <property type="entry name" value="NADH-UbQ_OxRdtase_51kDa_CS"/>
</dbReference>
<dbReference type="InterPro" id="IPR011537">
    <property type="entry name" value="NADH-UbQ_OxRdtase_suF"/>
</dbReference>
<dbReference type="InterPro" id="IPR011538">
    <property type="entry name" value="Nuo51_FMN-bd"/>
</dbReference>
<dbReference type="InterPro" id="IPR037225">
    <property type="entry name" value="Nuo51_FMN-bd_sf"/>
</dbReference>
<dbReference type="InterPro" id="IPR019575">
    <property type="entry name" value="Nuop51_4Fe4S-bd"/>
</dbReference>
<dbReference type="InterPro" id="IPR037207">
    <property type="entry name" value="Nuop51_4Fe4S-bd_sf"/>
</dbReference>
<dbReference type="NCBIfam" id="TIGR01959">
    <property type="entry name" value="nuoF_fam"/>
    <property type="match status" value="1"/>
</dbReference>
<dbReference type="NCBIfam" id="NF008436">
    <property type="entry name" value="PRK11278.1"/>
    <property type="match status" value="1"/>
</dbReference>
<dbReference type="NCBIfam" id="NF010120">
    <property type="entry name" value="PRK13596.1"/>
    <property type="match status" value="1"/>
</dbReference>
<dbReference type="PANTHER" id="PTHR43578">
    <property type="entry name" value="NADH-QUINONE OXIDOREDUCTASE SUBUNIT F"/>
    <property type="match status" value="1"/>
</dbReference>
<dbReference type="PANTHER" id="PTHR43578:SF3">
    <property type="entry name" value="NADH-QUINONE OXIDOREDUCTASE SUBUNIT F"/>
    <property type="match status" value="1"/>
</dbReference>
<dbReference type="Pfam" id="PF01512">
    <property type="entry name" value="Complex1_51K"/>
    <property type="match status" value="1"/>
</dbReference>
<dbReference type="Pfam" id="PF10589">
    <property type="entry name" value="NADH_4Fe-4S"/>
    <property type="match status" value="1"/>
</dbReference>
<dbReference type="SMART" id="SM00928">
    <property type="entry name" value="NADH_4Fe-4S"/>
    <property type="match status" value="1"/>
</dbReference>
<dbReference type="SUPFAM" id="SSF142019">
    <property type="entry name" value="Nqo1 FMN-binding domain-like"/>
    <property type="match status" value="1"/>
</dbReference>
<dbReference type="SUPFAM" id="SSF142984">
    <property type="entry name" value="Nqo1 middle domain-like"/>
    <property type="match status" value="1"/>
</dbReference>
<dbReference type="SUPFAM" id="SSF140490">
    <property type="entry name" value="Nqo1C-terminal domain-like"/>
    <property type="match status" value="1"/>
</dbReference>
<dbReference type="PROSITE" id="PS00644">
    <property type="entry name" value="COMPLEX1_51K_1"/>
    <property type="match status" value="1"/>
</dbReference>
<dbReference type="PROSITE" id="PS00645">
    <property type="entry name" value="COMPLEX1_51K_2"/>
    <property type="match status" value="1"/>
</dbReference>
<keyword id="KW-0004">4Fe-4S</keyword>
<keyword id="KW-0285">Flavoprotein</keyword>
<keyword id="KW-0288">FMN</keyword>
<keyword id="KW-0408">Iron</keyword>
<keyword id="KW-0411">Iron-sulfur</keyword>
<keyword id="KW-0479">Metal-binding</keyword>
<keyword id="KW-0520">NAD</keyword>
<keyword id="KW-0874">Quinone</keyword>
<keyword id="KW-1185">Reference proteome</keyword>
<keyword id="KW-1278">Translocase</keyword>
<keyword id="KW-0830">Ubiquinone</keyword>
<proteinExistence type="inferred from homology"/>